<reference key="1">
    <citation type="journal article" date="2003" name="Mol. Genet. Genomics">
        <title>Gene content and organization of an 85-kb DNA segment from the genome of the phytopathogenic mollicute Spiroplasma kunkelii.</title>
        <authorList>
            <person name="Zhao Y."/>
            <person name="Hammond R.W."/>
            <person name="Jomantiene R."/>
            <person name="Dally E.L."/>
            <person name="Lee I.-M."/>
            <person name="Jia H."/>
            <person name="Wu H."/>
            <person name="Lin S."/>
            <person name="Zhang P."/>
            <person name="Kenton S."/>
            <person name="Najar F.Z."/>
            <person name="Hua A."/>
            <person name="Roe B.A."/>
            <person name="Fletcher J."/>
            <person name="Davis R.E."/>
        </authorList>
    </citation>
    <scope>NUCLEOTIDE SEQUENCE [GENOMIC DNA]</scope>
    <source>
        <strain>CR2-3x</strain>
    </source>
</reference>
<proteinExistence type="inferred from homology"/>
<gene>
    <name evidence="1" type="primary">ecfA2</name>
    <name type="synonym">cbiO2</name>
</gene>
<dbReference type="EC" id="7.-.-.-" evidence="1"/>
<dbReference type="EMBL" id="AY198133">
    <property type="protein sequence ID" value="AAP58881.1"/>
    <property type="molecule type" value="Genomic_DNA"/>
</dbReference>
<dbReference type="SMR" id="Q6XYZ3"/>
<dbReference type="GO" id="GO:0043190">
    <property type="term" value="C:ATP-binding cassette (ABC) transporter complex"/>
    <property type="evidence" value="ECO:0007669"/>
    <property type="project" value="TreeGrafter"/>
</dbReference>
<dbReference type="GO" id="GO:0005524">
    <property type="term" value="F:ATP binding"/>
    <property type="evidence" value="ECO:0007669"/>
    <property type="project" value="UniProtKB-KW"/>
</dbReference>
<dbReference type="GO" id="GO:0016887">
    <property type="term" value="F:ATP hydrolysis activity"/>
    <property type="evidence" value="ECO:0007669"/>
    <property type="project" value="InterPro"/>
</dbReference>
<dbReference type="GO" id="GO:0042626">
    <property type="term" value="F:ATPase-coupled transmembrane transporter activity"/>
    <property type="evidence" value="ECO:0007669"/>
    <property type="project" value="TreeGrafter"/>
</dbReference>
<dbReference type="CDD" id="cd03225">
    <property type="entry name" value="ABC_cobalt_CbiO_domain1"/>
    <property type="match status" value="1"/>
</dbReference>
<dbReference type="FunFam" id="3.40.50.300:FF:000224">
    <property type="entry name" value="Energy-coupling factor transporter ATP-binding protein EcfA"/>
    <property type="match status" value="1"/>
</dbReference>
<dbReference type="Gene3D" id="3.40.50.300">
    <property type="entry name" value="P-loop containing nucleotide triphosphate hydrolases"/>
    <property type="match status" value="1"/>
</dbReference>
<dbReference type="InterPro" id="IPR003593">
    <property type="entry name" value="AAA+_ATPase"/>
</dbReference>
<dbReference type="InterPro" id="IPR003439">
    <property type="entry name" value="ABC_transporter-like_ATP-bd"/>
</dbReference>
<dbReference type="InterPro" id="IPR017871">
    <property type="entry name" value="ABC_transporter-like_CS"/>
</dbReference>
<dbReference type="InterPro" id="IPR015856">
    <property type="entry name" value="ABC_transpr_CbiO/EcfA_su"/>
</dbReference>
<dbReference type="InterPro" id="IPR050095">
    <property type="entry name" value="ECF_ABC_transporter_ATP-bd"/>
</dbReference>
<dbReference type="InterPro" id="IPR030946">
    <property type="entry name" value="EcfA2"/>
</dbReference>
<dbReference type="InterPro" id="IPR027417">
    <property type="entry name" value="P-loop_NTPase"/>
</dbReference>
<dbReference type="NCBIfam" id="TIGR04521">
    <property type="entry name" value="ECF_ATPase_2"/>
    <property type="match status" value="1"/>
</dbReference>
<dbReference type="PANTHER" id="PTHR43553:SF27">
    <property type="entry name" value="ENERGY-COUPLING FACTOR TRANSPORTER ATP-BINDING PROTEIN ECFA2"/>
    <property type="match status" value="1"/>
</dbReference>
<dbReference type="PANTHER" id="PTHR43553">
    <property type="entry name" value="HEAVY METAL TRANSPORTER"/>
    <property type="match status" value="1"/>
</dbReference>
<dbReference type="Pfam" id="PF00005">
    <property type="entry name" value="ABC_tran"/>
    <property type="match status" value="1"/>
</dbReference>
<dbReference type="SMART" id="SM00382">
    <property type="entry name" value="AAA"/>
    <property type="match status" value="1"/>
</dbReference>
<dbReference type="SUPFAM" id="SSF52540">
    <property type="entry name" value="P-loop containing nucleoside triphosphate hydrolases"/>
    <property type="match status" value="1"/>
</dbReference>
<dbReference type="PROSITE" id="PS00211">
    <property type="entry name" value="ABC_TRANSPORTER_1"/>
    <property type="match status" value="1"/>
</dbReference>
<dbReference type="PROSITE" id="PS50893">
    <property type="entry name" value="ABC_TRANSPORTER_2"/>
    <property type="match status" value="1"/>
</dbReference>
<dbReference type="PROSITE" id="PS51246">
    <property type="entry name" value="CBIO"/>
    <property type="match status" value="1"/>
</dbReference>
<comment type="function">
    <text evidence="1">ATP-binding (A) component of a common energy-coupling factor (ECF) ABC-transporter complex. Unlike classic ABC transporters this ECF transporter provides the energy necessary to transport a number of different substrates.</text>
</comment>
<comment type="subunit">
    <text evidence="1">Forms a stable energy-coupling factor (ECF) transporter complex composed of 2 membrane-embedded substrate-binding proteins (S component), 2 ATP-binding proteins (A component) and 2 transmembrane proteins (T component).</text>
</comment>
<comment type="subcellular location">
    <subcellularLocation>
        <location evidence="1">Cell membrane</location>
        <topology evidence="1">Peripheral membrane protein</topology>
    </subcellularLocation>
</comment>
<comment type="similarity">
    <text evidence="1">Belongs to the ABC transporter superfamily. Energy-coupling factor EcfA family.</text>
</comment>
<accession>Q6XYZ3</accession>
<sequence length="305" mass="34620">MSKVKKQPKIEALQNVDITFTNVSYVYSPKTPYEYTSLQDINVVIKPGKITAIIGSTGSGKSTLIQHINGLLIPTTGVVDTNGFIIKAKQKRIKNIKQLRKSIGLVFQFPEYQLFEETIEKDIMFGPVHLGETKEVARENAKKYLEMVGLPLNYLERSPFDLSGGQKRRVAIAGILAMEGNTLILDEPTAGLDPEGEEDFIKLFQRINKEQNKRIILVTHNMDHVLEIADEVIALKEGRVFKVGSPFEIFKDKNLLQELLIEPPKIYHLIYQLQEKGLDLTNVNIRTIDQLAKKIIEHKEQKRKG</sequence>
<evidence type="ECO:0000255" key="1">
    <source>
        <dbReference type="HAMAP-Rule" id="MF_01710"/>
    </source>
</evidence>
<keyword id="KW-0067">ATP-binding</keyword>
<keyword id="KW-1003">Cell membrane</keyword>
<keyword id="KW-0472">Membrane</keyword>
<keyword id="KW-0547">Nucleotide-binding</keyword>
<keyword id="KW-1278">Translocase</keyword>
<keyword id="KW-0813">Transport</keyword>
<protein>
    <recommendedName>
        <fullName evidence="1">Energy-coupling factor transporter ATP-binding protein EcfA2</fullName>
        <shortName evidence="1">ECF transporter A component EcfA2</shortName>
        <ecNumber evidence="1">7.-.-.-</ecNumber>
    </recommendedName>
</protein>
<feature type="chain" id="PRO_0000092061" description="Energy-coupling factor transporter ATP-binding protein EcfA2">
    <location>
        <begin position="1"/>
        <end position="305"/>
    </location>
</feature>
<feature type="domain" description="ABC transporter" evidence="1">
    <location>
        <begin position="13"/>
        <end position="262"/>
    </location>
</feature>
<feature type="binding site" evidence="1">
    <location>
        <begin position="55"/>
        <end position="62"/>
    </location>
    <ligand>
        <name>ATP</name>
        <dbReference type="ChEBI" id="CHEBI:30616"/>
    </ligand>
</feature>
<name>ECFA2_SPIKU</name>
<organism>
    <name type="scientific">Spiroplasma kunkelii</name>
    <dbReference type="NCBI Taxonomy" id="47834"/>
    <lineage>
        <taxon>Bacteria</taxon>
        <taxon>Bacillati</taxon>
        <taxon>Mycoplasmatota</taxon>
        <taxon>Mollicutes</taxon>
        <taxon>Entomoplasmatales</taxon>
        <taxon>Spiroplasmataceae</taxon>
        <taxon>Spiroplasma</taxon>
    </lineage>
</organism>